<reference key="1">
    <citation type="journal article" date="2007" name="Genome Res.">
        <title>Genome characteristics of facultatively symbiotic Frankia sp. strains reflect host range and host plant biogeography.</title>
        <authorList>
            <person name="Normand P."/>
            <person name="Lapierre P."/>
            <person name="Tisa L.S."/>
            <person name="Gogarten J.P."/>
            <person name="Alloisio N."/>
            <person name="Bagnarol E."/>
            <person name="Bassi C.A."/>
            <person name="Berry A.M."/>
            <person name="Bickhart D.M."/>
            <person name="Choisne N."/>
            <person name="Couloux A."/>
            <person name="Cournoyer B."/>
            <person name="Cruveiller S."/>
            <person name="Daubin V."/>
            <person name="Demange N."/>
            <person name="Francino M.P."/>
            <person name="Goltsman E."/>
            <person name="Huang Y."/>
            <person name="Kopp O.R."/>
            <person name="Labarre L."/>
            <person name="Lapidus A."/>
            <person name="Lavire C."/>
            <person name="Marechal J."/>
            <person name="Martinez M."/>
            <person name="Mastronunzio J.E."/>
            <person name="Mullin B.C."/>
            <person name="Niemann J."/>
            <person name="Pujic P."/>
            <person name="Rawnsley T."/>
            <person name="Rouy Z."/>
            <person name="Schenowitz C."/>
            <person name="Sellstedt A."/>
            <person name="Tavares F."/>
            <person name="Tomkins J.P."/>
            <person name="Vallenet D."/>
            <person name="Valverde C."/>
            <person name="Wall L.G."/>
            <person name="Wang Y."/>
            <person name="Medigue C."/>
            <person name="Benson D.R."/>
        </authorList>
    </citation>
    <scope>NUCLEOTIDE SEQUENCE [LARGE SCALE GENOMIC DNA]</scope>
    <source>
        <strain>DSM 45986 / CECT 9034 / ACN14a</strain>
    </source>
</reference>
<accession>Q0RG46</accession>
<name>NHAA3_FRAAA</name>
<protein>
    <recommendedName>
        <fullName evidence="1">Na(+)/H(+) antiporter NhaA 3</fullName>
    </recommendedName>
    <alternativeName>
        <fullName evidence="1">Sodium/proton antiporter NhaA 3</fullName>
    </alternativeName>
</protein>
<proteinExistence type="inferred from homology"/>
<gene>
    <name evidence="1" type="primary">nhaA3</name>
    <name type="ordered locus">FRAAL4902</name>
</gene>
<organism>
    <name type="scientific">Frankia alni (strain DSM 45986 / CECT 9034 / ACN14a)</name>
    <dbReference type="NCBI Taxonomy" id="326424"/>
    <lineage>
        <taxon>Bacteria</taxon>
        <taxon>Bacillati</taxon>
        <taxon>Actinomycetota</taxon>
        <taxon>Actinomycetes</taxon>
        <taxon>Frankiales</taxon>
        <taxon>Frankiaceae</taxon>
        <taxon>Frankia</taxon>
    </lineage>
</organism>
<comment type="function">
    <text evidence="1">Na(+)/H(+) antiporter that extrudes sodium in exchange for external protons.</text>
</comment>
<comment type="catalytic activity">
    <reaction evidence="1">
        <text>Na(+)(in) + 2 H(+)(out) = Na(+)(out) + 2 H(+)(in)</text>
        <dbReference type="Rhea" id="RHEA:29251"/>
        <dbReference type="ChEBI" id="CHEBI:15378"/>
        <dbReference type="ChEBI" id="CHEBI:29101"/>
    </reaction>
    <physiologicalReaction direction="left-to-right" evidence="1">
        <dbReference type="Rhea" id="RHEA:29252"/>
    </physiologicalReaction>
</comment>
<comment type="subcellular location">
    <subcellularLocation>
        <location evidence="1">Cell membrane</location>
        <topology evidence="1">Multi-pass membrane protein</topology>
    </subcellularLocation>
</comment>
<comment type="similarity">
    <text evidence="1">Belongs to the NhaA Na(+)/H(+) (TC 2.A.33) antiporter family.</text>
</comment>
<feature type="chain" id="PRO_0000334303" description="Na(+)/H(+) antiporter NhaA 3">
    <location>
        <begin position="1"/>
        <end position="463"/>
    </location>
</feature>
<feature type="transmembrane region" description="Helical" evidence="1">
    <location>
        <begin position="28"/>
        <end position="48"/>
    </location>
</feature>
<feature type="transmembrane region" description="Helical" evidence="1">
    <location>
        <begin position="79"/>
        <end position="99"/>
    </location>
</feature>
<feature type="transmembrane region" description="Helical" evidence="1">
    <location>
        <begin position="114"/>
        <end position="134"/>
    </location>
</feature>
<feature type="transmembrane region" description="Helical" evidence="1">
    <location>
        <begin position="144"/>
        <end position="164"/>
    </location>
</feature>
<feature type="transmembrane region" description="Helical" evidence="1">
    <location>
        <begin position="173"/>
        <end position="193"/>
    </location>
</feature>
<feature type="transmembrane region" description="Helical" evidence="1">
    <location>
        <begin position="196"/>
        <end position="216"/>
    </location>
</feature>
<feature type="transmembrane region" description="Helical" evidence="1">
    <location>
        <begin position="232"/>
        <end position="252"/>
    </location>
</feature>
<feature type="transmembrane region" description="Helical" evidence="1">
    <location>
        <begin position="305"/>
        <end position="325"/>
    </location>
</feature>
<feature type="transmembrane region" description="Helical" evidence="1">
    <location>
        <begin position="344"/>
        <end position="364"/>
    </location>
</feature>
<feature type="transmembrane region" description="Helical" evidence="1">
    <location>
        <begin position="377"/>
        <end position="397"/>
    </location>
</feature>
<feature type="transmembrane region" description="Helical" evidence="1">
    <location>
        <begin position="413"/>
        <end position="433"/>
    </location>
</feature>
<feature type="region of interest" description="Disordered" evidence="2">
    <location>
        <begin position="444"/>
        <end position="463"/>
    </location>
</feature>
<feature type="compositionally biased region" description="Pro residues" evidence="2">
    <location>
        <begin position="449"/>
        <end position="463"/>
    </location>
</feature>
<keyword id="KW-0050">Antiport</keyword>
<keyword id="KW-1003">Cell membrane</keyword>
<keyword id="KW-0406">Ion transport</keyword>
<keyword id="KW-0472">Membrane</keyword>
<keyword id="KW-1185">Reference proteome</keyword>
<keyword id="KW-0915">Sodium</keyword>
<keyword id="KW-0739">Sodium transport</keyword>
<keyword id="KW-0812">Transmembrane</keyword>
<keyword id="KW-1133">Transmembrane helix</keyword>
<keyword id="KW-0813">Transport</keyword>
<evidence type="ECO:0000255" key="1">
    <source>
        <dbReference type="HAMAP-Rule" id="MF_01844"/>
    </source>
</evidence>
<evidence type="ECO:0000256" key="2">
    <source>
        <dbReference type="SAM" id="MobiDB-lite"/>
    </source>
</evidence>
<dbReference type="EMBL" id="CT573213">
    <property type="protein sequence ID" value="CAJ63543.1"/>
    <property type="molecule type" value="Genomic_DNA"/>
</dbReference>
<dbReference type="RefSeq" id="WP_011606016.1">
    <property type="nucleotide sequence ID" value="NC_008278.1"/>
</dbReference>
<dbReference type="SMR" id="Q0RG46"/>
<dbReference type="STRING" id="326424.FRAAL4902"/>
<dbReference type="KEGG" id="fal:FRAAL4902"/>
<dbReference type="eggNOG" id="COG3004">
    <property type="taxonomic scope" value="Bacteria"/>
</dbReference>
<dbReference type="HOGENOM" id="CLU_015803_1_2_11"/>
<dbReference type="Proteomes" id="UP000000657">
    <property type="component" value="Chromosome"/>
</dbReference>
<dbReference type="GO" id="GO:0005886">
    <property type="term" value="C:plasma membrane"/>
    <property type="evidence" value="ECO:0007669"/>
    <property type="project" value="UniProtKB-SubCell"/>
</dbReference>
<dbReference type="GO" id="GO:0015385">
    <property type="term" value="F:sodium:proton antiporter activity"/>
    <property type="evidence" value="ECO:0007669"/>
    <property type="project" value="TreeGrafter"/>
</dbReference>
<dbReference type="GO" id="GO:0006885">
    <property type="term" value="P:regulation of pH"/>
    <property type="evidence" value="ECO:0007669"/>
    <property type="project" value="InterPro"/>
</dbReference>
<dbReference type="Gene3D" id="1.20.1530.10">
    <property type="entry name" value="Na+/H+ antiporter like domain"/>
    <property type="match status" value="1"/>
</dbReference>
<dbReference type="HAMAP" id="MF_01844">
    <property type="entry name" value="NhaA"/>
    <property type="match status" value="1"/>
</dbReference>
<dbReference type="InterPro" id="IPR023171">
    <property type="entry name" value="Na/H_antiporter_dom_sf"/>
</dbReference>
<dbReference type="InterPro" id="IPR004670">
    <property type="entry name" value="NhaA"/>
</dbReference>
<dbReference type="NCBIfam" id="TIGR00773">
    <property type="entry name" value="NhaA"/>
    <property type="match status" value="1"/>
</dbReference>
<dbReference type="PANTHER" id="PTHR30341:SF0">
    <property type="entry name" value="NA(+)_H(+) ANTIPORTER NHAA"/>
    <property type="match status" value="1"/>
</dbReference>
<dbReference type="PANTHER" id="PTHR30341">
    <property type="entry name" value="SODIUM ION/PROTON ANTIPORTER NHAA-RELATED"/>
    <property type="match status" value="1"/>
</dbReference>
<dbReference type="Pfam" id="PF06965">
    <property type="entry name" value="Na_H_antiport_1"/>
    <property type="match status" value="1"/>
</dbReference>
<sequence length="463" mass="48426">MRTVTAPPRPGPGLRVRLPQVAPSVREFLATEAGGAVLLLLAAVAALLWANSPWSGSYDRFWSTTAELRLGSAGFDMTLHHWVNDGAMAIFFAVVGLEISREFTTGELRDRRTIAVPALGAIGGLILPAAIYFVVNRSGPESNGWGIPMSTDTAFVIGILALFGPRCPDRLRLFLLTLAIVDDIGAITVVGIFYTDHLNPVGLAVAGATVLAILGLRWLRVWQLPPYILASLVLWGAIHVSGVHATLAGVLVGLLVPAVPPRPDQVEEVPVYVRALQEDSNATRVGLAVAAAKATVPANDRLQRVLHPISAFVVVPVFGLANAGVHLDGSALRTAATSSVTLGVAAALIAGNACGISVAGVAAIRTGLGQLPGRVRYGHLLGAATLAGIGFTISLFITELAFTDEALQEQAKIGILAGSLVAALAGTVILRVLGERMPLCSPMTDEPVPRLPPRPWRAPVPAK</sequence>